<dbReference type="EMBL" id="AF102623">
    <property type="protein sequence ID" value="AAD14631.1"/>
    <property type="molecule type" value="Genomic_DNA"/>
</dbReference>
<dbReference type="PDB" id="7XCN">
    <property type="method" value="X-ray"/>
    <property type="resolution" value="2.70 A"/>
    <property type="chains" value="M/N/O/P/Q/R=1-217"/>
</dbReference>
<dbReference type="PDBsum" id="7XCN"/>
<dbReference type="SMR" id="O93659"/>
<dbReference type="BioCyc" id="MetaCyc:MONOMER-12207"/>
<dbReference type="UniPathway" id="UPA00645"/>
<dbReference type="GO" id="GO:0005829">
    <property type="term" value="C:cytosol"/>
    <property type="evidence" value="ECO:0007669"/>
    <property type="project" value="TreeGrafter"/>
</dbReference>
<dbReference type="GO" id="GO:0031419">
    <property type="term" value="F:cobalamin binding"/>
    <property type="evidence" value="ECO:0007669"/>
    <property type="project" value="InterPro"/>
</dbReference>
<dbReference type="GO" id="GO:0050897">
    <property type="term" value="F:cobalt ion binding"/>
    <property type="evidence" value="ECO:0007669"/>
    <property type="project" value="InterPro"/>
</dbReference>
<dbReference type="GO" id="GO:0008705">
    <property type="term" value="F:methionine synthase activity"/>
    <property type="evidence" value="ECO:0007669"/>
    <property type="project" value="TreeGrafter"/>
</dbReference>
<dbReference type="GO" id="GO:0050667">
    <property type="term" value="P:homocysteine metabolic process"/>
    <property type="evidence" value="ECO:0007669"/>
    <property type="project" value="TreeGrafter"/>
</dbReference>
<dbReference type="GO" id="GO:0015948">
    <property type="term" value="P:methanogenesis"/>
    <property type="evidence" value="ECO:0007669"/>
    <property type="project" value="UniProtKB-KW"/>
</dbReference>
<dbReference type="GO" id="GO:0046653">
    <property type="term" value="P:tetrahydrofolate metabolic process"/>
    <property type="evidence" value="ECO:0007669"/>
    <property type="project" value="TreeGrafter"/>
</dbReference>
<dbReference type="CDD" id="cd02070">
    <property type="entry name" value="corrinoid_protein_B12-BD"/>
    <property type="match status" value="1"/>
</dbReference>
<dbReference type="FunFam" id="3.40.50.280:FF:000003">
    <property type="entry name" value="Dimethylamine methyltransferase corrinoid protein"/>
    <property type="match status" value="1"/>
</dbReference>
<dbReference type="FunFam" id="1.10.1240.10:FF:000004">
    <property type="entry name" value="Monomethylamine methyltransferase corrinoid protein"/>
    <property type="match status" value="1"/>
</dbReference>
<dbReference type="Gene3D" id="3.40.50.280">
    <property type="entry name" value="Cobalamin-binding domain"/>
    <property type="match status" value="1"/>
</dbReference>
<dbReference type="Gene3D" id="1.10.1240.10">
    <property type="entry name" value="Methionine synthase domain"/>
    <property type="match status" value="1"/>
</dbReference>
<dbReference type="InterPro" id="IPR003759">
    <property type="entry name" value="Cbl-bd_cap"/>
</dbReference>
<dbReference type="InterPro" id="IPR006158">
    <property type="entry name" value="Cobalamin-bd"/>
</dbReference>
<dbReference type="InterPro" id="IPR036724">
    <property type="entry name" value="Cobalamin-bd_sf"/>
</dbReference>
<dbReference type="InterPro" id="IPR012741">
    <property type="entry name" value="Corrinoid_p"/>
</dbReference>
<dbReference type="InterPro" id="IPR050554">
    <property type="entry name" value="Met_Synthase/Corrinoid"/>
</dbReference>
<dbReference type="InterPro" id="IPR036594">
    <property type="entry name" value="Meth_synthase_dom"/>
</dbReference>
<dbReference type="NCBIfam" id="TIGR02370">
    <property type="entry name" value="pyl_corrinoid"/>
    <property type="match status" value="1"/>
</dbReference>
<dbReference type="PANTHER" id="PTHR45833">
    <property type="entry name" value="METHIONINE SYNTHASE"/>
    <property type="match status" value="1"/>
</dbReference>
<dbReference type="PANTHER" id="PTHR45833:SF1">
    <property type="entry name" value="METHIONINE SYNTHASE"/>
    <property type="match status" value="1"/>
</dbReference>
<dbReference type="Pfam" id="PF02310">
    <property type="entry name" value="B12-binding"/>
    <property type="match status" value="1"/>
</dbReference>
<dbReference type="Pfam" id="PF02607">
    <property type="entry name" value="B12-binding_2"/>
    <property type="match status" value="1"/>
</dbReference>
<dbReference type="SMART" id="SM01018">
    <property type="entry name" value="B12-binding_2"/>
    <property type="match status" value="1"/>
</dbReference>
<dbReference type="SUPFAM" id="SSF52242">
    <property type="entry name" value="Cobalamin (vitamin B12)-binding domain"/>
    <property type="match status" value="1"/>
</dbReference>
<dbReference type="SUPFAM" id="SSF47644">
    <property type="entry name" value="Methionine synthase domain"/>
    <property type="match status" value="1"/>
</dbReference>
<dbReference type="PROSITE" id="PS51332">
    <property type="entry name" value="B12_BINDING"/>
    <property type="match status" value="1"/>
</dbReference>
<dbReference type="PROSITE" id="PS51337">
    <property type="entry name" value="B12_BINDING_NTER"/>
    <property type="match status" value="1"/>
</dbReference>
<name>MTTC_METBA</name>
<organism>
    <name type="scientific">Methanosarcina barkeri</name>
    <dbReference type="NCBI Taxonomy" id="2208"/>
    <lineage>
        <taxon>Archaea</taxon>
        <taxon>Methanobacteriati</taxon>
        <taxon>Methanobacteriota</taxon>
        <taxon>Stenosarchaea group</taxon>
        <taxon>Methanomicrobia</taxon>
        <taxon>Methanosarcinales</taxon>
        <taxon>Methanosarcinaceae</taxon>
        <taxon>Methanosarcina</taxon>
    </lineage>
</organism>
<comment type="function">
    <text>Acts probably as a methyl group carrier between MttB and either MtbA or MtaA.</text>
</comment>
<comment type="pathway">
    <text evidence="7">One-carbon metabolism; methanogenesis from trimethylamine.</text>
</comment>
<comment type="subunit">
    <text>Can form a complex with MttB.</text>
</comment>
<comment type="induction">
    <text evidence="4">Induced by growth on trimethylamine but not methanol or monomethylamine. Part of the mtbC-mttB-mttC and mtbC-mttB-mttC-mttP-mtbB1 operons.</text>
</comment>
<comment type="similarity">
    <text evidence="6">Belongs to the methylamine corrinoid protein family.</text>
</comment>
<evidence type="ECO:0000250" key="1"/>
<evidence type="ECO:0000255" key="2">
    <source>
        <dbReference type="PROSITE-ProRule" id="PRU00666"/>
    </source>
</evidence>
<evidence type="ECO:0000255" key="3">
    <source>
        <dbReference type="PROSITE-ProRule" id="PRU00667"/>
    </source>
</evidence>
<evidence type="ECO:0000269" key="4">
    <source>
    </source>
</evidence>
<evidence type="ECO:0000303" key="5">
    <source>
    </source>
</evidence>
<evidence type="ECO:0000305" key="6"/>
<evidence type="ECO:0000305" key="7">
    <source>
    </source>
</evidence>
<evidence type="ECO:0007829" key="8">
    <source>
        <dbReference type="PDB" id="7XCN"/>
    </source>
</evidence>
<accession>O93659</accession>
<protein>
    <recommendedName>
        <fullName>Trimethylamine corrinoid protein</fullName>
        <shortName>TCP</shortName>
    </recommendedName>
</protein>
<keyword id="KW-0002">3D-structure</keyword>
<keyword id="KW-0170">Cobalt</keyword>
<keyword id="KW-0903">Direct protein sequencing</keyword>
<keyword id="KW-0479">Metal-binding</keyword>
<keyword id="KW-0484">Methanogenesis</keyword>
<keyword id="KW-0677">Repeat</keyword>
<gene>
    <name evidence="5" type="primary">mttC</name>
</gene>
<sequence length="217" mass="23080">MANKEEIIAKAKEAITDFDDELAEEVANEALAAGIDPVELIEKGFTAGMEEVGEKFGQGELFLPHVLAAAEAMNSGIKVITPEMEKRKSQTKSLGTVAIGTIEGDIHSIGKDIVASMLNIAGFKVVDLGRDVPINTFVEKVKELKPQVVASSALMTTTMVNQIQIEEQLKEAGVRDQVKTMVGGAPVTQDWADKIGADIYGESANDAVAKVKAALNV</sequence>
<feature type="initiator methionine" description="Removed" evidence="4">
    <location>
        <position position="1"/>
    </location>
</feature>
<feature type="chain" id="PRO_0000216481" description="Trimethylamine corrinoid protein">
    <location>
        <begin position="2"/>
        <end position="217"/>
    </location>
</feature>
<feature type="domain" description="B12-binding N-terminal" evidence="3">
    <location>
        <begin position="1"/>
        <end position="92"/>
    </location>
</feature>
<feature type="domain" description="B12-binding" evidence="2">
    <location>
        <begin position="94"/>
        <end position="217"/>
    </location>
</feature>
<feature type="binding site" description="axial binding residue" evidence="1">
    <location>
        <position position="107"/>
    </location>
    <ligand>
        <name>methylcob(III)alamin</name>
        <dbReference type="ChEBI" id="CHEBI:28115"/>
    </ligand>
    <ligandPart>
        <name>Co</name>
        <dbReference type="ChEBI" id="CHEBI:27638"/>
    </ligandPart>
</feature>
<feature type="sequence conflict" description="In Ref. 1; AA sequence." evidence="6" ref="1">
    <original>F</original>
    <variation>P</variation>
    <location>
        <position position="18"/>
    </location>
</feature>
<feature type="helix" evidence="8">
    <location>
        <begin position="4"/>
        <end position="16"/>
    </location>
</feature>
<feature type="helix" evidence="8">
    <location>
        <begin position="20"/>
        <end position="31"/>
    </location>
</feature>
<feature type="turn" evidence="8">
    <location>
        <begin position="32"/>
        <end position="34"/>
    </location>
</feature>
<feature type="helix" evidence="8">
    <location>
        <begin position="37"/>
        <end position="42"/>
    </location>
</feature>
<feature type="helix" evidence="8">
    <location>
        <begin position="45"/>
        <end position="58"/>
    </location>
</feature>
<feature type="helix" evidence="8">
    <location>
        <begin position="63"/>
        <end position="79"/>
    </location>
</feature>
<feature type="helix" evidence="8">
    <location>
        <begin position="82"/>
        <end position="87"/>
    </location>
</feature>
<feature type="strand" evidence="8">
    <location>
        <begin position="96"/>
        <end position="102"/>
    </location>
</feature>
<feature type="helix" evidence="8">
    <location>
        <begin position="109"/>
        <end position="121"/>
    </location>
</feature>
<feature type="strand" evidence="8">
    <location>
        <begin position="124"/>
        <end position="127"/>
    </location>
</feature>
<feature type="strand" evidence="8">
    <location>
        <begin position="130"/>
        <end position="132"/>
    </location>
</feature>
<feature type="helix" evidence="8">
    <location>
        <begin position="134"/>
        <end position="144"/>
    </location>
</feature>
<feature type="strand" evidence="8">
    <location>
        <begin position="147"/>
        <end position="152"/>
    </location>
</feature>
<feature type="turn" evidence="8">
    <location>
        <begin position="156"/>
        <end position="158"/>
    </location>
</feature>
<feature type="helix" evidence="8">
    <location>
        <begin position="161"/>
        <end position="170"/>
    </location>
</feature>
<feature type="turn" evidence="8">
    <location>
        <begin position="171"/>
        <end position="173"/>
    </location>
</feature>
<feature type="turn" evidence="8">
    <location>
        <begin position="175"/>
        <end position="177"/>
    </location>
</feature>
<feature type="strand" evidence="8">
    <location>
        <begin position="178"/>
        <end position="184"/>
    </location>
</feature>
<feature type="helix" evidence="8">
    <location>
        <begin position="189"/>
        <end position="195"/>
    </location>
</feature>
<feature type="strand" evidence="8">
    <location>
        <begin position="198"/>
        <end position="203"/>
    </location>
</feature>
<feature type="helix" evidence="8">
    <location>
        <begin position="204"/>
        <end position="215"/>
    </location>
</feature>
<reference key="1">
    <citation type="journal article" date="2000" name="J. Bacteriol.">
        <title>The trimethylamine methyltransferase gene and multiple dimethylamine methyltransferase genes of Methanosarcina barkeri contain in-frame and read-through amber codons.</title>
        <authorList>
            <person name="Paul L."/>
            <person name="Ferguson D.J. Jr."/>
            <person name="Krzycki J.A."/>
        </authorList>
    </citation>
    <scope>NUCLEOTIDE SEQUENCE [GENOMIC DNA]</scope>
    <scope>PROTEIN SEQUENCE OF 2-35</scope>
    <scope>PATHWAY</scope>
    <scope>INDUCTION BY TRIMETHYLAMINE</scope>
    <source>
        <strain>ATCC 43569 / MS / DSM 800 / JCM 10043 / NBRC 100474</strain>
    </source>
</reference>
<reference key="2">
    <citation type="journal article" date="1997" name="J. Bacteriol.">
        <title>Reconstitution of trimethylamine-dependent coenzyme M methylation with the trimethylamine corrinoid protein and the isozymes of methyltransferase II from Methanosarcina barkeri.</title>
        <authorList>
            <person name="Ferguson D.J. Jr."/>
            <person name="Krzycki J.A."/>
        </authorList>
    </citation>
    <scope>CHARACTERIZATION</scope>
    <source>
        <strain>ATCC 43569 / MS / DSM 800 / JCM 10043 / NBRC 100474</strain>
    </source>
</reference>
<proteinExistence type="evidence at protein level"/>